<name>LEUD_BURP6</name>
<dbReference type="EC" id="4.2.1.33" evidence="1"/>
<dbReference type="EMBL" id="CP000571">
    <property type="protein sequence ID" value="ABN87144.1"/>
    <property type="molecule type" value="Genomic_DNA"/>
</dbReference>
<dbReference type="RefSeq" id="WP_004187882.1">
    <property type="nucleotide sequence ID" value="NC_009075.1"/>
</dbReference>
<dbReference type="SMR" id="A3NM75"/>
<dbReference type="GeneID" id="93063904"/>
<dbReference type="KEGG" id="bpd:BURPS668_A2452"/>
<dbReference type="HOGENOM" id="CLU_081378_0_3_4"/>
<dbReference type="UniPathway" id="UPA00048">
    <property type="reaction ID" value="UER00071"/>
</dbReference>
<dbReference type="GO" id="GO:0009316">
    <property type="term" value="C:3-isopropylmalate dehydratase complex"/>
    <property type="evidence" value="ECO:0007669"/>
    <property type="project" value="InterPro"/>
</dbReference>
<dbReference type="GO" id="GO:0003861">
    <property type="term" value="F:3-isopropylmalate dehydratase activity"/>
    <property type="evidence" value="ECO:0007669"/>
    <property type="project" value="UniProtKB-UniRule"/>
</dbReference>
<dbReference type="GO" id="GO:0009098">
    <property type="term" value="P:L-leucine biosynthetic process"/>
    <property type="evidence" value="ECO:0007669"/>
    <property type="project" value="UniProtKB-UniRule"/>
</dbReference>
<dbReference type="CDD" id="cd01577">
    <property type="entry name" value="IPMI_Swivel"/>
    <property type="match status" value="1"/>
</dbReference>
<dbReference type="FunFam" id="3.20.19.10:FF:000003">
    <property type="entry name" value="3-isopropylmalate dehydratase small subunit"/>
    <property type="match status" value="1"/>
</dbReference>
<dbReference type="Gene3D" id="3.20.19.10">
    <property type="entry name" value="Aconitase, domain 4"/>
    <property type="match status" value="1"/>
</dbReference>
<dbReference type="HAMAP" id="MF_01031">
    <property type="entry name" value="LeuD_type1"/>
    <property type="match status" value="1"/>
</dbReference>
<dbReference type="InterPro" id="IPR004431">
    <property type="entry name" value="3-IsopropMal_deHydase_ssu"/>
</dbReference>
<dbReference type="InterPro" id="IPR015928">
    <property type="entry name" value="Aconitase/3IPM_dehydase_swvl"/>
</dbReference>
<dbReference type="InterPro" id="IPR000573">
    <property type="entry name" value="AconitaseA/IPMdHydase_ssu_swvl"/>
</dbReference>
<dbReference type="InterPro" id="IPR033940">
    <property type="entry name" value="IPMI_Swivel"/>
</dbReference>
<dbReference type="InterPro" id="IPR050075">
    <property type="entry name" value="LeuD"/>
</dbReference>
<dbReference type="NCBIfam" id="TIGR00171">
    <property type="entry name" value="leuD"/>
    <property type="match status" value="1"/>
</dbReference>
<dbReference type="NCBIfam" id="NF002458">
    <property type="entry name" value="PRK01641.1"/>
    <property type="match status" value="1"/>
</dbReference>
<dbReference type="PANTHER" id="PTHR43345:SF5">
    <property type="entry name" value="3-ISOPROPYLMALATE DEHYDRATASE SMALL SUBUNIT"/>
    <property type="match status" value="1"/>
</dbReference>
<dbReference type="PANTHER" id="PTHR43345">
    <property type="entry name" value="3-ISOPROPYLMALATE DEHYDRATASE SMALL SUBUNIT 2-RELATED-RELATED"/>
    <property type="match status" value="1"/>
</dbReference>
<dbReference type="Pfam" id="PF00694">
    <property type="entry name" value="Aconitase_C"/>
    <property type="match status" value="1"/>
</dbReference>
<dbReference type="SUPFAM" id="SSF52016">
    <property type="entry name" value="LeuD/IlvD-like"/>
    <property type="match status" value="1"/>
</dbReference>
<comment type="function">
    <text evidence="1">Catalyzes the isomerization between 2-isopropylmalate and 3-isopropylmalate, via the formation of 2-isopropylmaleate.</text>
</comment>
<comment type="catalytic activity">
    <reaction evidence="1">
        <text>(2R,3S)-3-isopropylmalate = (2S)-2-isopropylmalate</text>
        <dbReference type="Rhea" id="RHEA:32287"/>
        <dbReference type="ChEBI" id="CHEBI:1178"/>
        <dbReference type="ChEBI" id="CHEBI:35121"/>
        <dbReference type="EC" id="4.2.1.33"/>
    </reaction>
</comment>
<comment type="pathway">
    <text evidence="1">Amino-acid biosynthesis; L-leucine biosynthesis; L-leucine from 3-methyl-2-oxobutanoate: step 2/4.</text>
</comment>
<comment type="subunit">
    <text evidence="1">Heterodimer of LeuC and LeuD.</text>
</comment>
<comment type="similarity">
    <text evidence="1">Belongs to the LeuD family. LeuD type 1 subfamily.</text>
</comment>
<sequence length="216" mass="24726">MEKFNVHTGVVAPLDRENVDTDAIIPKQFLKSIKRTGFGPNAFDEWRYLDHGEPGQDNSKRPLNPDFVLNQPRYQGASVLLARKNFGCGSSREHAPWALQQYGFRAIVAPSFADIFFNNCYKNGLLPIVLTEQQVDHLFNDTYAFNGYQLTIDLDAQVVRAPDGREYPFEITAFRKYCLLNGFDDIGLTLRHADKIRQFEAERLAKQPWLDNRLVG</sequence>
<protein>
    <recommendedName>
        <fullName evidence="1">3-isopropylmalate dehydratase small subunit</fullName>
        <ecNumber evidence="1">4.2.1.33</ecNumber>
    </recommendedName>
    <alternativeName>
        <fullName evidence="1">Alpha-IPM isomerase</fullName>
        <shortName evidence="1">IPMI</shortName>
    </alternativeName>
    <alternativeName>
        <fullName evidence="1">Isopropylmalate isomerase</fullName>
    </alternativeName>
</protein>
<proteinExistence type="inferred from homology"/>
<reference key="1">
    <citation type="journal article" date="2010" name="Genome Biol. Evol.">
        <title>Continuing evolution of Burkholderia mallei through genome reduction and large-scale rearrangements.</title>
        <authorList>
            <person name="Losada L."/>
            <person name="Ronning C.M."/>
            <person name="DeShazer D."/>
            <person name="Woods D."/>
            <person name="Fedorova N."/>
            <person name="Kim H.S."/>
            <person name="Shabalina S.A."/>
            <person name="Pearson T.R."/>
            <person name="Brinkac L."/>
            <person name="Tan P."/>
            <person name="Nandi T."/>
            <person name="Crabtree J."/>
            <person name="Badger J."/>
            <person name="Beckstrom-Sternberg S."/>
            <person name="Saqib M."/>
            <person name="Schutzer S.E."/>
            <person name="Keim P."/>
            <person name="Nierman W.C."/>
        </authorList>
    </citation>
    <scope>NUCLEOTIDE SEQUENCE [LARGE SCALE GENOMIC DNA]</scope>
    <source>
        <strain>668</strain>
    </source>
</reference>
<evidence type="ECO:0000255" key="1">
    <source>
        <dbReference type="HAMAP-Rule" id="MF_01031"/>
    </source>
</evidence>
<keyword id="KW-0028">Amino-acid biosynthesis</keyword>
<keyword id="KW-0100">Branched-chain amino acid biosynthesis</keyword>
<keyword id="KW-0432">Leucine biosynthesis</keyword>
<keyword id="KW-0456">Lyase</keyword>
<feature type="chain" id="PRO_1000063746" description="3-isopropylmalate dehydratase small subunit">
    <location>
        <begin position="1"/>
        <end position="216"/>
    </location>
</feature>
<organism>
    <name type="scientific">Burkholderia pseudomallei (strain 668)</name>
    <dbReference type="NCBI Taxonomy" id="320373"/>
    <lineage>
        <taxon>Bacteria</taxon>
        <taxon>Pseudomonadati</taxon>
        <taxon>Pseudomonadota</taxon>
        <taxon>Betaproteobacteria</taxon>
        <taxon>Burkholderiales</taxon>
        <taxon>Burkholderiaceae</taxon>
        <taxon>Burkholderia</taxon>
        <taxon>pseudomallei group</taxon>
    </lineage>
</organism>
<accession>A3NM75</accession>
<gene>
    <name evidence="1" type="primary">leuD</name>
    <name type="ordered locus">BURPS668_A2452</name>
</gene>